<sequence length="429" mass="48782">MVLISETSDDGSTGGDHQIKKPKKEEDRNKKLKEKVQVSLPIPEELILRCFLLVRRCHHPSLSLVCRSFHSLMSKLYDDRLRLGYTENVLYAYVGFPPVENPSWYILHRKPYRNLPNTISLKLCKIDSLPPMPWGSTVVTIGSDIYVIGGRVGEKLLEDVGVGYNKPISGGRRGETSIRGGHAGERRISDVTHINCRFHEYRSLPSMKMARCRAAAGVIDGKIYVIGGRKVRTSDWVEVFDLKKQSWSSVPGPYPEAFGRGEFLTYAVMKEKIYCLDLTRNIHIYDPKESKWESWTHGPLSASWNDSSCVVDNLLFCINTSVYFLGWPIKIYDPEKKTWFYLQGLQGFPANGLFVDGYKMANFGGKLVILSADVHRLRRYDCRKREIWCIEIAWERKEDGTFWGKVESVAVVLTPAKTTSVDICGTVTV</sequence>
<name>FBK32_ARATH</name>
<accession>Q9SIJ3</accession>
<accession>F4IHL1</accession>
<reference key="1">
    <citation type="journal article" date="1999" name="Nature">
        <title>Sequence and analysis of chromosome 2 of the plant Arabidopsis thaliana.</title>
        <authorList>
            <person name="Lin X."/>
            <person name="Kaul S."/>
            <person name="Rounsley S.D."/>
            <person name="Shea T.P."/>
            <person name="Benito M.-I."/>
            <person name="Town C.D."/>
            <person name="Fujii C.Y."/>
            <person name="Mason T.M."/>
            <person name="Bowman C.L."/>
            <person name="Barnstead M.E."/>
            <person name="Feldblyum T.V."/>
            <person name="Buell C.R."/>
            <person name="Ketchum K.A."/>
            <person name="Lee J.J."/>
            <person name="Ronning C.M."/>
            <person name="Koo H.L."/>
            <person name="Moffat K.S."/>
            <person name="Cronin L.A."/>
            <person name="Shen M."/>
            <person name="Pai G."/>
            <person name="Van Aken S."/>
            <person name="Umayam L."/>
            <person name="Tallon L.J."/>
            <person name="Gill J.E."/>
            <person name="Adams M.D."/>
            <person name="Carrera A.J."/>
            <person name="Creasy T.H."/>
            <person name="Goodman H.M."/>
            <person name="Somerville C.R."/>
            <person name="Copenhaver G.P."/>
            <person name="Preuss D."/>
            <person name="Nierman W.C."/>
            <person name="White O."/>
            <person name="Eisen J.A."/>
            <person name="Salzberg S.L."/>
            <person name="Fraser C.M."/>
            <person name="Venter J.C."/>
        </authorList>
    </citation>
    <scope>NUCLEOTIDE SEQUENCE [LARGE SCALE GENOMIC DNA]</scope>
    <source>
        <strain>cv. Columbia</strain>
    </source>
</reference>
<reference key="2">
    <citation type="journal article" date="2017" name="Plant J.">
        <title>Araport11: a complete reannotation of the Arabidopsis thaliana reference genome.</title>
        <authorList>
            <person name="Cheng C.Y."/>
            <person name="Krishnakumar V."/>
            <person name="Chan A.P."/>
            <person name="Thibaud-Nissen F."/>
            <person name="Schobel S."/>
            <person name="Town C.D."/>
        </authorList>
    </citation>
    <scope>GENOME REANNOTATION</scope>
    <source>
        <strain>cv. Columbia</strain>
    </source>
</reference>
<gene>
    <name type="ordered locus">At2g21680</name>
    <name type="ORF">F2G1.5</name>
</gene>
<organism>
    <name type="scientific">Arabidopsis thaliana</name>
    <name type="common">Mouse-ear cress</name>
    <dbReference type="NCBI Taxonomy" id="3702"/>
    <lineage>
        <taxon>Eukaryota</taxon>
        <taxon>Viridiplantae</taxon>
        <taxon>Streptophyta</taxon>
        <taxon>Embryophyta</taxon>
        <taxon>Tracheophyta</taxon>
        <taxon>Spermatophyta</taxon>
        <taxon>Magnoliopsida</taxon>
        <taxon>eudicotyledons</taxon>
        <taxon>Gunneridae</taxon>
        <taxon>Pentapetalae</taxon>
        <taxon>rosids</taxon>
        <taxon>malvids</taxon>
        <taxon>Brassicales</taxon>
        <taxon>Brassicaceae</taxon>
        <taxon>Camelineae</taxon>
        <taxon>Arabidopsis</taxon>
    </lineage>
</organism>
<feature type="chain" id="PRO_0000283192" description="Putative F-box/kelch-repeat protein At2g21680">
    <location>
        <begin position="1"/>
        <end position="429"/>
    </location>
</feature>
<feature type="domain" description="F-box">
    <location>
        <begin position="37"/>
        <end position="84"/>
    </location>
</feature>
<feature type="repeat" description="Kelch 1">
    <location>
        <begin position="144"/>
        <end position="175"/>
    </location>
</feature>
<feature type="repeat" description="Kelch 2">
    <location>
        <begin position="176"/>
        <end position="221"/>
    </location>
</feature>
<feature type="repeat" description="Kelch 3">
    <location>
        <begin position="222"/>
        <end position="267"/>
    </location>
</feature>
<feature type="repeat" description="Kelch 4">
    <location>
        <begin position="269"/>
        <end position="313"/>
    </location>
</feature>
<feature type="repeat" description="Kelch 5">
    <location>
        <begin position="315"/>
        <end position="359"/>
    </location>
</feature>
<feature type="region of interest" description="Disordered" evidence="1">
    <location>
        <begin position="1"/>
        <end position="32"/>
    </location>
</feature>
<feature type="compositionally biased region" description="Basic and acidic residues" evidence="1">
    <location>
        <begin position="17"/>
        <end position="29"/>
    </location>
</feature>
<proteinExistence type="predicted"/>
<comment type="sequence caution" evidence="2">
    <conflict type="erroneous gene model prediction">
        <sequence resource="EMBL-CDS" id="AAD23638"/>
    </conflict>
</comment>
<keyword id="KW-0880">Kelch repeat</keyword>
<keyword id="KW-1185">Reference proteome</keyword>
<keyword id="KW-0677">Repeat</keyword>
<evidence type="ECO:0000256" key="1">
    <source>
        <dbReference type="SAM" id="MobiDB-lite"/>
    </source>
</evidence>
<evidence type="ECO:0000305" key="2"/>
<protein>
    <recommendedName>
        <fullName>Putative F-box/kelch-repeat protein At2g21680</fullName>
    </recommendedName>
</protein>
<dbReference type="EMBL" id="AC007119">
    <property type="protein sequence ID" value="AAD23638.1"/>
    <property type="status" value="ALT_SEQ"/>
    <property type="molecule type" value="Genomic_DNA"/>
</dbReference>
<dbReference type="EMBL" id="CP002685">
    <property type="protein sequence ID" value="AEC07211.1"/>
    <property type="molecule type" value="Genomic_DNA"/>
</dbReference>
<dbReference type="PIR" id="A84604">
    <property type="entry name" value="A84604"/>
</dbReference>
<dbReference type="RefSeq" id="NP_179761.4">
    <property type="nucleotide sequence ID" value="NM_127739.4"/>
</dbReference>
<dbReference type="SMR" id="Q9SIJ3"/>
<dbReference type="PaxDb" id="3702-AT2G21680.1"/>
<dbReference type="EnsemblPlants" id="AT2G21680.1">
    <property type="protein sequence ID" value="AT2G21680.1"/>
    <property type="gene ID" value="AT2G21680"/>
</dbReference>
<dbReference type="GeneID" id="816706"/>
<dbReference type="Gramene" id="AT2G21680.1">
    <property type="protein sequence ID" value="AT2G21680.1"/>
    <property type="gene ID" value="AT2G21680"/>
</dbReference>
<dbReference type="KEGG" id="ath:AT2G21680"/>
<dbReference type="Araport" id="AT2G21680"/>
<dbReference type="TAIR" id="AT2G21680"/>
<dbReference type="eggNOG" id="KOG1072">
    <property type="taxonomic scope" value="Eukaryota"/>
</dbReference>
<dbReference type="HOGENOM" id="CLU_032521_1_2_1"/>
<dbReference type="InParanoid" id="Q9SIJ3"/>
<dbReference type="OMA" id="IEIAWER"/>
<dbReference type="PRO" id="PR:Q9SIJ3"/>
<dbReference type="Proteomes" id="UP000006548">
    <property type="component" value="Chromosome 2"/>
</dbReference>
<dbReference type="ExpressionAtlas" id="Q9SIJ3">
    <property type="expression patterns" value="baseline and differential"/>
</dbReference>
<dbReference type="Gene3D" id="2.120.10.80">
    <property type="entry name" value="Kelch-type beta propeller"/>
    <property type="match status" value="1"/>
</dbReference>
<dbReference type="InterPro" id="IPR050354">
    <property type="entry name" value="F-box/kelch-repeat_ARATH"/>
</dbReference>
<dbReference type="InterPro" id="IPR001810">
    <property type="entry name" value="F-box_dom"/>
</dbReference>
<dbReference type="InterPro" id="IPR015915">
    <property type="entry name" value="Kelch-typ_b-propeller"/>
</dbReference>
<dbReference type="PANTHER" id="PTHR24414:SF65">
    <property type="entry name" value="F-BOX DOMAIN-CONTAINING PROTEIN"/>
    <property type="match status" value="1"/>
</dbReference>
<dbReference type="PANTHER" id="PTHR24414">
    <property type="entry name" value="F-BOX/KELCH-REPEAT PROTEIN SKIP4"/>
    <property type="match status" value="1"/>
</dbReference>
<dbReference type="Pfam" id="PF00646">
    <property type="entry name" value="F-box"/>
    <property type="match status" value="1"/>
</dbReference>
<dbReference type="Pfam" id="PF25210">
    <property type="entry name" value="Kelch_FKB95"/>
    <property type="match status" value="1"/>
</dbReference>
<dbReference type="SUPFAM" id="SSF117281">
    <property type="entry name" value="Kelch motif"/>
    <property type="match status" value="1"/>
</dbReference>